<name>PKH4B_HUMAN</name>
<reference key="1">
    <citation type="journal article" date="2004" name="Nature">
        <title>The DNA sequence and comparative analysis of human chromosome 5.</title>
        <authorList>
            <person name="Schmutz J."/>
            <person name="Martin J."/>
            <person name="Terry A."/>
            <person name="Couronne O."/>
            <person name="Grimwood J."/>
            <person name="Lowry S."/>
            <person name="Gordon L.A."/>
            <person name="Scott D."/>
            <person name="Xie G."/>
            <person name="Huang W."/>
            <person name="Hellsten U."/>
            <person name="Tran-Gyamfi M."/>
            <person name="She X."/>
            <person name="Prabhakar S."/>
            <person name="Aerts A."/>
            <person name="Altherr M."/>
            <person name="Bajorek E."/>
            <person name="Black S."/>
            <person name="Branscomb E."/>
            <person name="Caoile C."/>
            <person name="Challacombe J.F."/>
            <person name="Chan Y.M."/>
            <person name="Denys M."/>
            <person name="Detter J.C."/>
            <person name="Escobar J."/>
            <person name="Flowers D."/>
            <person name="Fotopulos D."/>
            <person name="Glavina T."/>
            <person name="Gomez M."/>
            <person name="Gonzales E."/>
            <person name="Goodstein D."/>
            <person name="Grigoriev I."/>
            <person name="Groza M."/>
            <person name="Hammon N."/>
            <person name="Hawkins T."/>
            <person name="Haydu L."/>
            <person name="Israni S."/>
            <person name="Jett J."/>
            <person name="Kadner K."/>
            <person name="Kimball H."/>
            <person name="Kobayashi A."/>
            <person name="Lopez F."/>
            <person name="Lou Y."/>
            <person name="Martinez D."/>
            <person name="Medina C."/>
            <person name="Morgan J."/>
            <person name="Nandkeshwar R."/>
            <person name="Noonan J.P."/>
            <person name="Pitluck S."/>
            <person name="Pollard M."/>
            <person name="Predki P."/>
            <person name="Priest J."/>
            <person name="Ramirez L."/>
            <person name="Retterer J."/>
            <person name="Rodriguez A."/>
            <person name="Rogers S."/>
            <person name="Salamov A."/>
            <person name="Salazar A."/>
            <person name="Thayer N."/>
            <person name="Tice H."/>
            <person name="Tsai M."/>
            <person name="Ustaszewska A."/>
            <person name="Vo N."/>
            <person name="Wheeler J."/>
            <person name="Wu K."/>
            <person name="Yang J."/>
            <person name="Dickson M."/>
            <person name="Cheng J.-F."/>
            <person name="Eichler E.E."/>
            <person name="Olsen A."/>
            <person name="Pennacchio L.A."/>
            <person name="Rokhsar D.S."/>
            <person name="Richardson P."/>
            <person name="Lucas S.M."/>
            <person name="Myers R.M."/>
            <person name="Rubin E.M."/>
        </authorList>
    </citation>
    <scope>NUCLEOTIDE SEQUENCE [LARGE SCALE GENOMIC DNA]</scope>
</reference>
<reference key="2">
    <citation type="journal article" date="2001" name="DNA Res.">
        <title>Prediction of the coding sequences of unidentified human genes. XXI. The complete sequences of 60 new cDNA clones from brain which code for large proteins.</title>
        <authorList>
            <person name="Nagase T."/>
            <person name="Kikuno R."/>
            <person name="Ohara O."/>
        </authorList>
    </citation>
    <scope>NUCLEOTIDE SEQUENCE [LARGE SCALE MRNA] OF 341-1627</scope>
    <scope>VARIANTS PRO-1025; GLN-1432 AND GLY-1502</scope>
    <source>
        <tissue>Brain</tissue>
    </source>
</reference>
<reference key="3">
    <citation type="journal article" date="2020" name="Nat. Cell Biol.">
        <title>Systems analysis of RhoGEF and RhoGAP regulatory proteins reveals spatially organized RAC1 signalling from integrin adhesions.</title>
        <authorList>
            <person name="Mueller P.M."/>
            <person name="Rademacher J."/>
            <person name="Bagshaw R.D."/>
            <person name="Wortmann C."/>
            <person name="Barth C."/>
            <person name="van Unen J."/>
            <person name="Alp K.M."/>
            <person name="Giudice G."/>
            <person name="Eccles R.L."/>
            <person name="Heinrich L.E."/>
            <person name="Pascual-Vargas P."/>
            <person name="Sanchez-Castro M."/>
            <person name="Brandenburg L."/>
            <person name="Mbamalu G."/>
            <person name="Tucholska M."/>
            <person name="Spatt L."/>
            <person name="Czajkowski M.T."/>
            <person name="Welke R.W."/>
            <person name="Zhang S."/>
            <person name="Nguyen V."/>
            <person name="Rrustemi T."/>
            <person name="Trnka P."/>
            <person name="Freitag K."/>
            <person name="Larsen B."/>
            <person name="Popp O."/>
            <person name="Mertins P."/>
            <person name="Gingras A.C."/>
            <person name="Roth F.P."/>
            <person name="Colwill K."/>
            <person name="Bakal C."/>
            <person name="Pertz O."/>
            <person name="Pawson T."/>
            <person name="Petsalaki E."/>
            <person name="Rocks O."/>
        </authorList>
    </citation>
    <scope>FUNCTION</scope>
    <scope>SUBUNIT</scope>
    <scope>DOMAIN</scope>
    <scope>INTERACTION WITH ARHGEF11 AND ARHGEF12</scope>
</reference>
<reference key="4">
    <citation type="journal article" date="2021" name="J. Cell Sci.">
        <title>PLEKHG4B enables actin cytoskeletal remodeling during epithelial cell-cell junction formation.</title>
        <authorList>
            <person name="Ninomiya K."/>
            <person name="Ohta K."/>
            <person name="Yamashita K."/>
            <person name="Mizuno K."/>
            <person name="Ohashi K."/>
        </authorList>
    </citation>
    <scope>SUBCELLULAR LOCATION</scope>
    <scope>FUNCTION</scope>
    <scope>INTERACTION WITH ANXA2</scope>
</reference>
<reference key="5">
    <citation type="journal article" date="2024" name="Mol. Biol. Cell">
        <title>Calcium influx promotes PLEKHG4B localization to cell-cell junctions and regulates the integrity of junctional actin filaments.</title>
        <authorList>
            <person name="Ninomiya K."/>
            <person name="Ohta K."/>
            <person name="Kawasaki U."/>
            <person name="Chiba S."/>
            <person name="Inoue T."/>
            <person name="Kuranaga E."/>
            <person name="Ohashi K."/>
            <person name="Mizuno K."/>
        </authorList>
    </citation>
    <scope>SUBCELLULAR LOCATION</scope>
    <scope>MUTAGENESIS OF LYS-1373</scope>
</reference>
<evidence type="ECO:0000255" key="1">
    <source>
        <dbReference type="PROSITE-ProRule" id="PRU00062"/>
    </source>
</evidence>
<evidence type="ECO:0000255" key="2">
    <source>
        <dbReference type="PROSITE-ProRule" id="PRU00145"/>
    </source>
</evidence>
<evidence type="ECO:0000256" key="3">
    <source>
        <dbReference type="SAM" id="MobiDB-lite"/>
    </source>
</evidence>
<evidence type="ECO:0000269" key="4">
    <source>
    </source>
</evidence>
<evidence type="ECO:0000269" key="5">
    <source>
    </source>
</evidence>
<evidence type="ECO:0000269" key="6">
    <source>
    </source>
</evidence>
<evidence type="ECO:0000269" key="7">
    <source>
    </source>
</evidence>
<evidence type="ECO:0000305" key="8"/>
<evidence type="ECO:0000312" key="9">
    <source>
        <dbReference type="HGNC" id="HGNC:29399"/>
    </source>
</evidence>
<organism>
    <name type="scientific">Homo sapiens</name>
    <name type="common">Human</name>
    <dbReference type="NCBI Taxonomy" id="9606"/>
    <lineage>
        <taxon>Eukaryota</taxon>
        <taxon>Metazoa</taxon>
        <taxon>Chordata</taxon>
        <taxon>Craniata</taxon>
        <taxon>Vertebrata</taxon>
        <taxon>Euteleostomi</taxon>
        <taxon>Mammalia</taxon>
        <taxon>Eutheria</taxon>
        <taxon>Euarchontoglires</taxon>
        <taxon>Primates</taxon>
        <taxon>Haplorrhini</taxon>
        <taxon>Catarrhini</taxon>
        <taxon>Hominidae</taxon>
        <taxon>Homo</taxon>
    </lineage>
</organism>
<accession>Q96PX9</accession>
<accession>A0A1B0GW72</accession>
<gene>
    <name evidence="9" type="primary">PLEKHG4B</name>
    <name type="synonym">KIAA1909</name>
</gene>
<sequence>MGFSTADGGGGPGARDLESLDACIQRTLSALYPPFEATAATVLWQLFSVAERCHGGDGLHCLTSFLLPAKRALQHLQQEACARYRGLVFLHPGWPLCAHEKVVVQLASLHGVRLQPGDFYLQVTSAGKQSARLVLKCLSRLGRGTEEVTVPEAMYGCVFTGAFLEWVNRERRHVPLQTCLLTSGLAVHRAPWSDVTDPVFVPSPGAILQSYSSCTGPERLPSSPSEAPVPTQATAGPHFQGSASCPDTLTSPCRRGHTGSDQLRHLPYPERAELGSPRTLSGSSDRDFEKVSPSEQGPRMPPENCGGSGERPDPMDQEDRPKALTFHTDLGIPSSRRRPPGDPTCVQPRRWFRESYMEALRNPMPLGSSEEALGDLACSSLTGASRDLGTGAVASGTQEETSGPRGDPQQTPSLEKERHTPSRTGPGAAGRTLPRRSRSWERAPRSSRGAQAAACHTSHHSAGSRPGGHLGGQAVGTPNCVPVEGPGCTKEEDVLASSACVSTDGGSLHCHNPSGPSDVPARQPHPEQEGWPPGTGDFPSQVPKQVLDVSQELLQSGVVTLPGTRDRHGRAVVQVRTRSLLWTREHSSCAELTRLLLYFHSIPRKEVRDLGLVVLVDARRSPAAPAVSQALSGLQNNTSPIIHSILLLVDKESAFRPDKDAIIQCEVVSSLKAVHKFVDSCQLTADLDGSFPYSHGDWICFRQRLEHFAANCEEAIIFLQNSFCSLNTHRTPRTAQEVAELIDQHETMMKLVLEDPLLVSLRLEGGTVLARLRREELGTEDSRDTLEAATSLYDRVDEEVHRLVLTSNNRLQQLEHLRELASLLEGNDQQSCQKGLQLAKENPQRTEEMVQDFRRGLSAVVSQAECREGELARWTRSSELCETVSSWMGPLDPEACPSSPVAECLRSCHQEATSVAAEAFPGAGVAVLKPHALGKPWASQQDLWLQYPQTRLRLEEALSEAAPDPSLPPLAQSPPKHERAQEAMRRHQKPPSFPSTDSGGGAWEPAQPLSGLPGRALLCGQDGETLRPGLCALWDPLSLLRGLPGAGATTAHLEDSSACSSEPTQTLASRPRKHPQKKMIKKTQSFEIPQPDSGPRDSCQPDHTSVFSKGLEVTSTVATEKKLPLWQHARSPPVTQSRSLSSPSGLHPAEEDGRQQVGSSRLRHIMAEMIATEREYIRCLGYVIDNYFPEMERMDLPQGLRGKHHVIFGNLEKLHDFHQQHFLRELERCQHCPLAVGRSFLRHEEQFGMYVIYSKNKPQSDALLSSHGNAFFKDKQRELGDKMDLASYLLRPVQRVAKYALLLQDLLKEASCGLAQGQELGELRAAEVVVCFQLRHGNDLLAMDAIRGCDVNLKEQGQLRCRDEFIVCCGRKKYLRHVFLFEDLILFSKTQKVEGSHDVYLYKQSFKTAEIGMTENVGDSGLRFEIWFRRRRKSQDTYILQASSAEVKSAWTDVIGRILWRQALKSRELRIQEMASMGIGNQPFMDVKPRDRTPDCAVISDRAPKCAVMSDRVPDSIVKGTESQMRGSTAVSSSDHAAPFKRPHSTISDSSTSSSSSQSSSILGSLGLLVSSSPAHPGLWSPAHSPWSSDIRACVEEDEPEPELETGTQAAVCEGAPAVLLSRTRQA</sequence>
<comment type="function">
    <text evidence="5 6">Guanine nucleotide exchange factor (GEF) which specifically activates small GTPase CDC42 by exchanging bound GDP for free GTP. Plays a role in actin cytoskeletal remodeling in the late stage of cell-cell junction formation by regulating the contractility of actin filaments, which prompts the conversion from 'open' to 'closed' junctions.</text>
</comment>
<comment type="subunit">
    <text evidence="5 6">Found in a complex with ARHGEF11 and ARHGEF12; binding to ARHGEF11 and ARHGEF12 enhances CDC42 GEF activity of PLEKHG4B, and PLEKHG4B, in turn, inhibits ARHGEF11- and ARHGEF12-mediated RHOA activation (PubMed:32203420). Interacts with ANXA2; this interaction is required for PLEKHG4B localization to cell-cell adhesions (PubMed:33310911).</text>
</comment>
<comment type="interaction">
    <interactant intactId="EBI-11741362">
        <id>Q96PX9</id>
    </interactant>
    <interactant intactId="EBI-25399484">
        <id>O15085-1</id>
        <label>ARHGEF11</label>
    </interactant>
    <organismsDiffer>false</organismsDiffer>
    <experiments>3</experiments>
</comment>
<comment type="interaction">
    <interactant intactId="EBI-11741362">
        <id>Q96PX9</id>
    </interactant>
    <interactant intactId="EBI-9640168">
        <id>Q9NZN5-1</id>
        <label>ARHGEF12</label>
    </interactant>
    <organismsDiffer>false</organismsDiffer>
    <experiments>3</experiments>
</comment>
<comment type="interaction">
    <interactant intactId="EBI-11741362">
        <id>Q96PX9</id>
    </interactant>
    <interactant intactId="EBI-741101">
        <id>Q13643</id>
        <label>FHL3</label>
    </interactant>
    <organismsDiffer>false</organismsDiffer>
    <experiments>4</experiments>
</comment>
<comment type="subcellular location">
    <subcellularLocation>
        <location evidence="6 7">Basal cell membrane</location>
    </subcellularLocation>
    <subcellularLocation>
        <location evidence="6 7">Cell junction</location>
    </subcellularLocation>
    <subcellularLocation>
        <location evidence="6">Nucleus</location>
    </subcellularLocation>
    <subcellularLocation>
        <location evidence="6">Cytoplasm</location>
    </subcellularLocation>
    <text evidence="6 7">Located at the basal plane of cell-cell junctions (PubMed:33310911). Intracellular Ca(2+) concentration is a key factor in regulating PLEKHG4B localization; it diffusely distributes in the cytoplasm under low Ca(2+) conditions, localizes to the basal membrane under normal Ca(2+) conditions, and accumulates at the cell-cell junction under higher Ca(2+) conditions (PubMed:38088892).</text>
</comment>
<comment type="domain">
    <text evidence="5">Subjects to autoinhibition, mediated by the N-terminal domain.</text>
</comment>
<comment type="sequence caution" evidence="8">
    <conflict type="erroneous initiation">
        <sequence resource="EMBL-CDS" id="BAB67802"/>
    </conflict>
    <text>Truncated N-terminus.</text>
</comment>
<proteinExistence type="evidence at protein level"/>
<dbReference type="EMBL" id="AB067496">
    <property type="protein sequence ID" value="BAB67802.2"/>
    <property type="status" value="ALT_INIT"/>
    <property type="molecule type" value="mRNA"/>
</dbReference>
<dbReference type="EMBL" id="AC010443">
    <property type="status" value="NOT_ANNOTATED_CDS"/>
    <property type="molecule type" value="Genomic_DNA"/>
</dbReference>
<dbReference type="EMBL" id="AC021087">
    <property type="status" value="NOT_ANNOTATED_CDS"/>
    <property type="molecule type" value="Genomic_DNA"/>
</dbReference>
<dbReference type="EMBL" id="AC113430">
    <property type="status" value="NOT_ANNOTATED_CDS"/>
    <property type="molecule type" value="Genomic_DNA"/>
</dbReference>
<dbReference type="EMBL" id="KF457844">
    <property type="status" value="NOT_ANNOTATED_CDS"/>
    <property type="molecule type" value="Genomic_DNA"/>
</dbReference>
<dbReference type="CCDS" id="CCDS34124.2"/>
<dbReference type="RefSeq" id="NP_443141.4">
    <property type="nucleotide sequence ID" value="NM_052909.5"/>
</dbReference>
<dbReference type="RefSeq" id="XP_006714509.1">
    <property type="nucleotide sequence ID" value="XM_006714446.3"/>
</dbReference>
<dbReference type="SMR" id="Q96PX9"/>
<dbReference type="BioGRID" id="127497">
    <property type="interactions" value="27"/>
</dbReference>
<dbReference type="FunCoup" id="Q96PX9">
    <property type="interactions" value="542"/>
</dbReference>
<dbReference type="IntAct" id="Q96PX9">
    <property type="interactions" value="15"/>
</dbReference>
<dbReference type="STRING" id="9606.ENSP00000490806"/>
<dbReference type="iPTMnet" id="Q96PX9"/>
<dbReference type="PhosphoSitePlus" id="Q96PX9"/>
<dbReference type="BioMuta" id="PLEKHG4B"/>
<dbReference type="DMDM" id="296439496"/>
<dbReference type="jPOST" id="Q96PX9"/>
<dbReference type="MassIVE" id="Q96PX9"/>
<dbReference type="PaxDb" id="9606-ENSP00000283426"/>
<dbReference type="PeptideAtlas" id="Q96PX9"/>
<dbReference type="ProteomicsDB" id="77784"/>
<dbReference type="Antibodypedia" id="49942">
    <property type="antibodies" value="23 antibodies from 10 providers"/>
</dbReference>
<dbReference type="DNASU" id="153478"/>
<dbReference type="Ensembl" id="ENST00000637938.2">
    <property type="protein sequence ID" value="ENSP00000490806.1"/>
    <property type="gene ID" value="ENSG00000153404.15"/>
</dbReference>
<dbReference type="GeneID" id="153478"/>
<dbReference type="MANE-Select" id="ENST00000637938.2">
    <property type="protein sequence ID" value="ENSP00000490806.1"/>
    <property type="RefSeq nucleotide sequence ID" value="NM_052909.5"/>
    <property type="RefSeq protein sequence ID" value="NP_443141.4"/>
</dbReference>
<dbReference type="UCSC" id="uc003jak.3">
    <property type="organism name" value="human"/>
</dbReference>
<dbReference type="AGR" id="HGNC:29399"/>
<dbReference type="DisGeNET" id="153478"/>
<dbReference type="GeneCards" id="PLEKHG4B"/>
<dbReference type="HGNC" id="HGNC:29399">
    <property type="gene designation" value="PLEKHG4B"/>
</dbReference>
<dbReference type="HPA" id="ENSG00000153404">
    <property type="expression patterns" value="Tissue enhanced (choroid)"/>
</dbReference>
<dbReference type="MalaCards" id="PLEKHG4B"/>
<dbReference type="MIM" id="620665">
    <property type="type" value="gene"/>
</dbReference>
<dbReference type="neXtProt" id="NX_Q96PX9"/>
<dbReference type="OpenTargets" id="ENSG00000153404"/>
<dbReference type="PharmGKB" id="PA162399667"/>
<dbReference type="VEuPathDB" id="HostDB:ENSG00000153404"/>
<dbReference type="eggNOG" id="KOG0689">
    <property type="taxonomic scope" value="Eukaryota"/>
</dbReference>
<dbReference type="eggNOG" id="KOG4240">
    <property type="taxonomic scope" value="Eukaryota"/>
</dbReference>
<dbReference type="GeneTree" id="ENSGT00940000162507"/>
<dbReference type="HOGENOM" id="CLU_001356_2_2_1"/>
<dbReference type="InParanoid" id="Q96PX9"/>
<dbReference type="OMA" id="DLWLQCP"/>
<dbReference type="OrthoDB" id="6152532at2759"/>
<dbReference type="PAN-GO" id="Q96PX9">
    <property type="GO annotations" value="0 GO annotations based on evolutionary models"/>
</dbReference>
<dbReference type="PhylomeDB" id="Q96PX9"/>
<dbReference type="TreeFam" id="TF334329"/>
<dbReference type="PathwayCommons" id="Q96PX9"/>
<dbReference type="Reactome" id="R-HSA-9013148">
    <property type="pathway name" value="CDC42 GTPase cycle"/>
</dbReference>
<dbReference type="SignaLink" id="Q96PX9"/>
<dbReference type="SIGNOR" id="Q96PX9"/>
<dbReference type="BioGRID-ORCS" id="153478">
    <property type="hits" value="14 hits in 1135 CRISPR screens"/>
</dbReference>
<dbReference type="ChiTaRS" id="PLEKHG4B">
    <property type="organism name" value="human"/>
</dbReference>
<dbReference type="GenomeRNAi" id="153478"/>
<dbReference type="Pharos" id="Q96PX9">
    <property type="development level" value="Tdark"/>
</dbReference>
<dbReference type="PRO" id="PR:Q96PX9"/>
<dbReference type="Proteomes" id="UP000005640">
    <property type="component" value="Chromosome 5"/>
</dbReference>
<dbReference type="RNAct" id="Q96PX9">
    <property type="molecule type" value="protein"/>
</dbReference>
<dbReference type="Bgee" id="ENSG00000153404">
    <property type="expression patterns" value="Expressed in ventricular zone and 109 other cell types or tissues"/>
</dbReference>
<dbReference type="ExpressionAtlas" id="Q96PX9">
    <property type="expression patterns" value="baseline and differential"/>
</dbReference>
<dbReference type="GO" id="GO:0009925">
    <property type="term" value="C:basal plasma membrane"/>
    <property type="evidence" value="ECO:0000314"/>
    <property type="project" value="UniProtKB"/>
</dbReference>
<dbReference type="GO" id="GO:0005911">
    <property type="term" value="C:cell-cell junction"/>
    <property type="evidence" value="ECO:0000314"/>
    <property type="project" value="UniProtKB"/>
</dbReference>
<dbReference type="GO" id="GO:0005737">
    <property type="term" value="C:cytoplasm"/>
    <property type="evidence" value="ECO:0000314"/>
    <property type="project" value="UniProtKB"/>
</dbReference>
<dbReference type="GO" id="GO:0005829">
    <property type="term" value="C:cytosol"/>
    <property type="evidence" value="ECO:0000304"/>
    <property type="project" value="Reactome"/>
</dbReference>
<dbReference type="GO" id="GO:0019898">
    <property type="term" value="C:extrinsic component of membrane"/>
    <property type="evidence" value="ECO:0000318"/>
    <property type="project" value="GO_Central"/>
</dbReference>
<dbReference type="GO" id="GO:0005634">
    <property type="term" value="C:nucleus"/>
    <property type="evidence" value="ECO:0000314"/>
    <property type="project" value="UniProtKB"/>
</dbReference>
<dbReference type="GO" id="GO:0005886">
    <property type="term" value="C:plasma membrane"/>
    <property type="evidence" value="ECO:0000318"/>
    <property type="project" value="GO_Central"/>
</dbReference>
<dbReference type="GO" id="GO:0005085">
    <property type="term" value="F:guanyl-nucleotide exchange factor activity"/>
    <property type="evidence" value="ECO:0000314"/>
    <property type="project" value="UniProtKB"/>
</dbReference>
<dbReference type="GO" id="GO:0007411">
    <property type="term" value="P:axon guidance"/>
    <property type="evidence" value="ECO:0000318"/>
    <property type="project" value="GO_Central"/>
</dbReference>
<dbReference type="GO" id="GO:0098609">
    <property type="term" value="P:cell-cell adhesion"/>
    <property type="evidence" value="ECO:0000314"/>
    <property type="project" value="UniProtKB"/>
</dbReference>
<dbReference type="GO" id="GO:0051056">
    <property type="term" value="P:regulation of small GTPase mediated signal transduction"/>
    <property type="evidence" value="ECO:0000304"/>
    <property type="project" value="Reactome"/>
</dbReference>
<dbReference type="CDD" id="cd13242">
    <property type="entry name" value="PH_puratrophin-1"/>
    <property type="match status" value="1"/>
</dbReference>
<dbReference type="CDD" id="cd00160">
    <property type="entry name" value="RhoGEF"/>
    <property type="match status" value="1"/>
</dbReference>
<dbReference type="Gene3D" id="1.20.900.10">
    <property type="entry name" value="Dbl homology (DH) domain"/>
    <property type="match status" value="1"/>
</dbReference>
<dbReference type="Gene3D" id="2.30.29.30">
    <property type="entry name" value="Pleckstrin-homology domain (PH domain)/Phosphotyrosine-binding domain (PTB)"/>
    <property type="match status" value="1"/>
</dbReference>
<dbReference type="InterPro" id="IPR035899">
    <property type="entry name" value="DBL_dom_sf"/>
</dbReference>
<dbReference type="InterPro" id="IPR000219">
    <property type="entry name" value="DH_dom"/>
</dbReference>
<dbReference type="InterPro" id="IPR011993">
    <property type="entry name" value="PH-like_dom_sf"/>
</dbReference>
<dbReference type="InterPro" id="IPR001849">
    <property type="entry name" value="PH_domain"/>
</dbReference>
<dbReference type="InterPro" id="IPR052231">
    <property type="entry name" value="Rho_GEF_signaling-related"/>
</dbReference>
<dbReference type="InterPro" id="IPR055251">
    <property type="entry name" value="SOS1_NGEF_PH"/>
</dbReference>
<dbReference type="PANTHER" id="PTHR45845:SF1">
    <property type="entry name" value="PLECKSTRIN HOMOLOGY AND RHOGEF DOMAIN CONTAINING G4B"/>
    <property type="match status" value="1"/>
</dbReference>
<dbReference type="PANTHER" id="PTHR45845">
    <property type="entry name" value="RHO GUANINE NUCLEOTIDE EXCHANGE FACTOR-RELATED"/>
    <property type="match status" value="1"/>
</dbReference>
<dbReference type="Pfam" id="PF00621">
    <property type="entry name" value="RhoGEF"/>
    <property type="match status" value="1"/>
</dbReference>
<dbReference type="Pfam" id="PF22697">
    <property type="entry name" value="SOS1_NGEF_PH"/>
    <property type="match status" value="1"/>
</dbReference>
<dbReference type="SMART" id="SM00233">
    <property type="entry name" value="PH"/>
    <property type="match status" value="1"/>
</dbReference>
<dbReference type="SMART" id="SM00325">
    <property type="entry name" value="RhoGEF"/>
    <property type="match status" value="1"/>
</dbReference>
<dbReference type="SUPFAM" id="SSF48065">
    <property type="entry name" value="DBL homology domain (DH-domain)"/>
    <property type="match status" value="1"/>
</dbReference>
<dbReference type="SUPFAM" id="SSF50729">
    <property type="entry name" value="PH domain-like"/>
    <property type="match status" value="1"/>
</dbReference>
<dbReference type="PROSITE" id="PS50010">
    <property type="entry name" value="DH_2"/>
    <property type="match status" value="1"/>
</dbReference>
<dbReference type="PROSITE" id="PS50003">
    <property type="entry name" value="PH_DOMAIN"/>
    <property type="match status" value="1"/>
</dbReference>
<protein>
    <recommendedName>
        <fullName>Pleckstrin homology domain-containing family G member 4B</fullName>
        <shortName>PH domain-containing family G member 4B</shortName>
    </recommendedName>
</protein>
<keyword id="KW-0965">Cell junction</keyword>
<keyword id="KW-1003">Cell membrane</keyword>
<keyword id="KW-0963">Cytoplasm</keyword>
<keyword id="KW-0344">Guanine-nucleotide releasing factor</keyword>
<keyword id="KW-0472">Membrane</keyword>
<keyword id="KW-0539">Nucleus</keyword>
<keyword id="KW-1267">Proteomics identification</keyword>
<keyword id="KW-1185">Reference proteome</keyword>
<feature type="chain" id="PRO_0000317286" description="Pleckstrin homology domain-containing family G member 4B">
    <location>
        <begin position="1"/>
        <end position="1627"/>
    </location>
</feature>
<feature type="domain" description="DH" evidence="1">
    <location>
        <begin position="1161"/>
        <end position="1340"/>
    </location>
</feature>
<feature type="domain" description="PH" evidence="2">
    <location>
        <begin position="1352"/>
        <end position="1460"/>
    </location>
</feature>
<feature type="region of interest" description="Disordered" evidence="3">
    <location>
        <begin position="211"/>
        <end position="349"/>
    </location>
</feature>
<feature type="region of interest" description="Disordered" evidence="3">
    <location>
        <begin position="381"/>
        <end position="475"/>
    </location>
</feature>
<feature type="region of interest" description="Disordered" evidence="3">
    <location>
        <begin position="501"/>
        <end position="537"/>
    </location>
</feature>
<feature type="region of interest" description="Disordered" evidence="3">
    <location>
        <begin position="959"/>
        <end position="1008"/>
    </location>
</feature>
<feature type="region of interest" description="Disordered" evidence="3">
    <location>
        <begin position="1049"/>
        <end position="1111"/>
    </location>
</feature>
<feature type="region of interest" description="Disordered" evidence="3">
    <location>
        <begin position="1124"/>
        <end position="1159"/>
    </location>
</feature>
<feature type="region of interest" description="Disordered" evidence="3">
    <location>
        <begin position="1519"/>
        <end position="1558"/>
    </location>
</feature>
<feature type="compositionally biased region" description="Polar residues" evidence="3">
    <location>
        <begin position="241"/>
        <end position="251"/>
    </location>
</feature>
<feature type="compositionally biased region" description="Basic and acidic residues" evidence="3">
    <location>
        <begin position="262"/>
        <end position="273"/>
    </location>
</feature>
<feature type="compositionally biased region" description="Basic and acidic residues" evidence="3">
    <location>
        <begin position="310"/>
        <end position="322"/>
    </location>
</feature>
<feature type="compositionally biased region" description="Gly residues" evidence="3">
    <location>
        <begin position="465"/>
        <end position="474"/>
    </location>
</feature>
<feature type="compositionally biased region" description="Basic and acidic residues" evidence="3">
    <location>
        <begin position="975"/>
        <end position="985"/>
    </location>
</feature>
<feature type="compositionally biased region" description="Polar residues" evidence="3">
    <location>
        <begin position="1057"/>
        <end position="1068"/>
    </location>
</feature>
<feature type="compositionally biased region" description="Basic residues" evidence="3">
    <location>
        <begin position="1070"/>
        <end position="1081"/>
    </location>
</feature>
<feature type="compositionally biased region" description="Polar residues" evidence="3">
    <location>
        <begin position="1101"/>
        <end position="1111"/>
    </location>
</feature>
<feature type="compositionally biased region" description="Polar residues" evidence="3">
    <location>
        <begin position="1133"/>
        <end position="1144"/>
    </location>
</feature>
<feature type="compositionally biased region" description="Polar residues" evidence="3">
    <location>
        <begin position="1521"/>
        <end position="1535"/>
    </location>
</feature>
<feature type="compositionally biased region" description="Low complexity" evidence="3">
    <location>
        <begin position="1545"/>
        <end position="1558"/>
    </location>
</feature>
<feature type="sequence variant" id="VAR_059547" description="In dbSNP:rs12516846.">
    <original>V</original>
    <variation>A</variation>
    <location>
        <position position="393"/>
    </location>
</feature>
<feature type="sequence variant" id="VAR_056672" description="In dbSNP:rs12523402.">
    <original>A</original>
    <variation>T</variation>
    <location>
        <position position="428"/>
    </location>
</feature>
<feature type="sequence variant" id="VAR_056673" description="In dbSNP:rs11949577.">
    <original>G</original>
    <variation>S</variation>
    <location>
        <position position="505"/>
    </location>
</feature>
<feature type="sequence variant" id="VAR_056674" description="In dbSNP:rs13436090.">
    <original>R</original>
    <variation>H</variation>
    <location>
        <position position="576"/>
    </location>
</feature>
<feature type="sequence variant" id="VAR_056675" description="In dbSNP:rs3810869.">
    <original>A</original>
    <variation>V</variation>
    <location>
        <position position="1016"/>
    </location>
</feature>
<feature type="sequence variant" id="VAR_060453" description="In dbSNP:rs29674." evidence="4">
    <original>T</original>
    <variation>P</variation>
    <location>
        <position position="1025"/>
    </location>
</feature>
<feature type="sequence variant" id="VAR_060454" description="In dbSNP:rs4956987." evidence="4">
    <original>R</original>
    <variation>Q</variation>
    <location>
        <position position="1432"/>
    </location>
</feature>
<feature type="sequence variant" id="VAR_060455" description="In dbSNP:rs12519352." evidence="4">
    <original>R</original>
    <variation>G</variation>
    <location>
        <position position="1502"/>
    </location>
</feature>
<feature type="mutagenesis site" description="Does not localize to the basal membrane nor accumulate at cell-cell junctions in ionomycin-treated cells. Does not affect interaction with ANXA2." evidence="7">
    <original>K</original>
    <variation>A</variation>
    <variation>E</variation>
    <location>
        <position position="1373"/>
    </location>
</feature>
<feature type="sequence conflict" description="In Ref. 2; BAB67802." evidence="8" ref="2">
    <original>R</original>
    <variation>G</variation>
    <location>
        <position position="1027"/>
    </location>
</feature>